<dbReference type="EMBL" id="CP000076">
    <property type="protein sequence ID" value="AAY94796.1"/>
    <property type="molecule type" value="Genomic_DNA"/>
</dbReference>
<dbReference type="RefSeq" id="WP_011063781.1">
    <property type="nucleotide sequence ID" value="NC_004129.6"/>
</dbReference>
<dbReference type="STRING" id="220664.PFL_5591"/>
<dbReference type="GeneID" id="57478540"/>
<dbReference type="KEGG" id="pfl:PFL_5591"/>
<dbReference type="PATRIC" id="fig|220664.5.peg.5710"/>
<dbReference type="eggNOG" id="COG0244">
    <property type="taxonomic scope" value="Bacteria"/>
</dbReference>
<dbReference type="HOGENOM" id="CLU_092227_0_2_6"/>
<dbReference type="Proteomes" id="UP000008540">
    <property type="component" value="Chromosome"/>
</dbReference>
<dbReference type="GO" id="GO:0015934">
    <property type="term" value="C:large ribosomal subunit"/>
    <property type="evidence" value="ECO:0007669"/>
    <property type="project" value="InterPro"/>
</dbReference>
<dbReference type="GO" id="GO:0070180">
    <property type="term" value="F:large ribosomal subunit rRNA binding"/>
    <property type="evidence" value="ECO:0007669"/>
    <property type="project" value="UniProtKB-UniRule"/>
</dbReference>
<dbReference type="GO" id="GO:0003735">
    <property type="term" value="F:structural constituent of ribosome"/>
    <property type="evidence" value="ECO:0007669"/>
    <property type="project" value="InterPro"/>
</dbReference>
<dbReference type="GO" id="GO:0006412">
    <property type="term" value="P:translation"/>
    <property type="evidence" value="ECO:0007669"/>
    <property type="project" value="UniProtKB-UniRule"/>
</dbReference>
<dbReference type="CDD" id="cd05797">
    <property type="entry name" value="Ribosomal_L10"/>
    <property type="match status" value="1"/>
</dbReference>
<dbReference type="FunFam" id="3.30.70.1730:FF:000001">
    <property type="entry name" value="50S ribosomal protein L10"/>
    <property type="match status" value="1"/>
</dbReference>
<dbReference type="Gene3D" id="3.30.70.1730">
    <property type="match status" value="1"/>
</dbReference>
<dbReference type="Gene3D" id="6.10.250.2350">
    <property type="match status" value="1"/>
</dbReference>
<dbReference type="HAMAP" id="MF_00362">
    <property type="entry name" value="Ribosomal_uL10"/>
    <property type="match status" value="1"/>
</dbReference>
<dbReference type="InterPro" id="IPR001790">
    <property type="entry name" value="Ribosomal_uL10"/>
</dbReference>
<dbReference type="InterPro" id="IPR043141">
    <property type="entry name" value="Ribosomal_uL10-like_sf"/>
</dbReference>
<dbReference type="InterPro" id="IPR022973">
    <property type="entry name" value="Ribosomal_uL10_bac"/>
</dbReference>
<dbReference type="InterPro" id="IPR047865">
    <property type="entry name" value="Ribosomal_uL10_bac_type"/>
</dbReference>
<dbReference type="InterPro" id="IPR002363">
    <property type="entry name" value="Ribosomal_uL10_CS_bac"/>
</dbReference>
<dbReference type="NCBIfam" id="NF000955">
    <property type="entry name" value="PRK00099.1-1"/>
    <property type="match status" value="1"/>
</dbReference>
<dbReference type="PANTHER" id="PTHR11560">
    <property type="entry name" value="39S RIBOSOMAL PROTEIN L10, MITOCHONDRIAL"/>
    <property type="match status" value="1"/>
</dbReference>
<dbReference type="Pfam" id="PF00466">
    <property type="entry name" value="Ribosomal_L10"/>
    <property type="match status" value="1"/>
</dbReference>
<dbReference type="SUPFAM" id="SSF160369">
    <property type="entry name" value="Ribosomal protein L10-like"/>
    <property type="match status" value="1"/>
</dbReference>
<dbReference type="PROSITE" id="PS01109">
    <property type="entry name" value="RIBOSOMAL_L10"/>
    <property type="match status" value="1"/>
</dbReference>
<keyword id="KW-0687">Ribonucleoprotein</keyword>
<keyword id="KW-0689">Ribosomal protein</keyword>
<keyword id="KW-0694">RNA-binding</keyword>
<keyword id="KW-0699">rRNA-binding</keyword>
<feature type="chain" id="PRO_0000234873" description="Large ribosomal subunit protein uL10">
    <location>
        <begin position="1"/>
        <end position="166"/>
    </location>
</feature>
<organism>
    <name type="scientific">Pseudomonas fluorescens (strain ATCC BAA-477 / NRRL B-23932 / Pf-5)</name>
    <dbReference type="NCBI Taxonomy" id="220664"/>
    <lineage>
        <taxon>Bacteria</taxon>
        <taxon>Pseudomonadati</taxon>
        <taxon>Pseudomonadota</taxon>
        <taxon>Gammaproteobacteria</taxon>
        <taxon>Pseudomonadales</taxon>
        <taxon>Pseudomonadaceae</taxon>
        <taxon>Pseudomonas</taxon>
    </lineage>
</organism>
<name>RL10_PSEF5</name>
<protein>
    <recommendedName>
        <fullName evidence="1">Large ribosomal subunit protein uL10</fullName>
    </recommendedName>
    <alternativeName>
        <fullName evidence="2">50S ribosomal protein L10</fullName>
    </alternativeName>
</protein>
<sequence length="166" mass="17629">MAIKLEDKKAIVAEVNEAAKAALSAVVADARGVTVGAMTGLRKEAREAGVYVRVVRNTLLKRAVEGTQYDVLNDAFVGPTLIAFSKEHPGAAARIFKEFAKGQEKFEIKAAAFEGKYLAANEIDVLASLPTRDEAIAKLMSVIQGATSKLARTLAAIRDQKEAAAA</sequence>
<proteinExistence type="inferred from homology"/>
<accession>Q4K524</accession>
<reference key="1">
    <citation type="journal article" date="2005" name="Nat. Biotechnol.">
        <title>Complete genome sequence of the plant commensal Pseudomonas fluorescens Pf-5.</title>
        <authorList>
            <person name="Paulsen I.T."/>
            <person name="Press C.M."/>
            <person name="Ravel J."/>
            <person name="Kobayashi D.Y."/>
            <person name="Myers G.S.A."/>
            <person name="Mavrodi D.V."/>
            <person name="DeBoy R.T."/>
            <person name="Seshadri R."/>
            <person name="Ren Q."/>
            <person name="Madupu R."/>
            <person name="Dodson R.J."/>
            <person name="Durkin A.S."/>
            <person name="Brinkac L.M."/>
            <person name="Daugherty S.C."/>
            <person name="Sullivan S.A."/>
            <person name="Rosovitz M.J."/>
            <person name="Gwinn M.L."/>
            <person name="Zhou L."/>
            <person name="Schneider D.J."/>
            <person name="Cartinhour S.W."/>
            <person name="Nelson W.C."/>
            <person name="Weidman J."/>
            <person name="Watkins K."/>
            <person name="Tran K."/>
            <person name="Khouri H."/>
            <person name="Pierson E.A."/>
            <person name="Pierson L.S. III"/>
            <person name="Thomashow L.S."/>
            <person name="Loper J.E."/>
        </authorList>
    </citation>
    <scope>NUCLEOTIDE SEQUENCE [LARGE SCALE GENOMIC DNA]</scope>
    <source>
        <strain>ATCC BAA-477 / NRRL B-23932 / Pf-5</strain>
    </source>
</reference>
<comment type="function">
    <text evidence="1">Forms part of the ribosomal stalk, playing a central role in the interaction of the ribosome with GTP-bound translation factors.</text>
</comment>
<comment type="subunit">
    <text evidence="1">Part of the ribosomal stalk of the 50S ribosomal subunit. The N-terminus interacts with L11 and the large rRNA to form the base of the stalk. The C-terminus forms an elongated spine to which L12 dimers bind in a sequential fashion forming a multimeric L10(L12)X complex.</text>
</comment>
<comment type="similarity">
    <text evidence="1">Belongs to the universal ribosomal protein uL10 family.</text>
</comment>
<gene>
    <name evidence="1" type="primary">rplJ</name>
    <name type="ordered locus">PFL_5591</name>
</gene>
<evidence type="ECO:0000255" key="1">
    <source>
        <dbReference type="HAMAP-Rule" id="MF_00362"/>
    </source>
</evidence>
<evidence type="ECO:0000305" key="2"/>